<proteinExistence type="evidence at protein level"/>
<protein>
    <recommendedName>
        <fullName evidence="9">Malformin synthetase mlfA</fullName>
        <ecNumber evidence="8">6.3.2.-</ecNumber>
    </recommendedName>
    <alternativeName>
        <fullName evidence="9">Malformin biosynthesis cluster protein A</fullName>
    </alternativeName>
    <alternativeName>
        <fullName evidence="9">Nonribosomal peptide synthetase mlfA</fullName>
    </alternativeName>
</protein>
<gene>
    <name type="ORF">BO97DRAFT_465346</name>
</gene>
<feature type="chain" id="PRO_0000446431" description="Malformin synthetase mlfA">
    <location>
        <begin position="1"/>
        <end position="5098"/>
    </location>
</feature>
<feature type="domain" description="Carrier 1" evidence="2">
    <location>
        <begin position="756"/>
        <end position="829"/>
    </location>
</feature>
<feature type="domain" description="Carrier 2" evidence="2">
    <location>
        <begin position="1853"/>
        <end position="1930"/>
    </location>
</feature>
<feature type="domain" description="Carrier 3" evidence="2">
    <location>
        <begin position="3029"/>
        <end position="3105"/>
    </location>
</feature>
<feature type="domain" description="Carrier 4" evidence="2">
    <location>
        <begin position="4576"/>
        <end position="4652"/>
    </location>
</feature>
<feature type="region of interest" description="Adenylation 1" evidence="1">
    <location>
        <begin position="225"/>
        <end position="616"/>
    </location>
</feature>
<feature type="region of interest" description="Condensation 1" evidence="1">
    <location>
        <begin position="867"/>
        <end position="1298"/>
    </location>
</feature>
<feature type="region of interest" description="Adenylation 2" evidence="1">
    <location>
        <begin position="1326"/>
        <end position="1715"/>
    </location>
</feature>
<feature type="region of interest" description="Disordered" evidence="3">
    <location>
        <begin position="1930"/>
        <end position="1960"/>
    </location>
</feature>
<feature type="region of interest" description="Disordered" evidence="3">
    <location>
        <begin position="1993"/>
        <end position="2022"/>
    </location>
</feature>
<feature type="region of interest" description="Condensation 2" evidence="1">
    <location>
        <begin position="2063"/>
        <end position="2478"/>
    </location>
</feature>
<feature type="region of interest" description="Adenylation 3" evidence="1">
    <location>
        <begin position="2501"/>
        <end position="2893"/>
    </location>
</feature>
<feature type="region of interest" description="Condensation 3" evidence="1">
    <location>
        <begin position="3122"/>
        <end position="3587"/>
    </location>
</feature>
<feature type="region of interest" description="Condensation 4" evidence="1">
    <location>
        <begin position="3608"/>
        <end position="4027"/>
    </location>
</feature>
<feature type="region of interest" description="Adenylation 4" evidence="1">
    <location>
        <begin position="4052"/>
        <end position="4442"/>
    </location>
</feature>
<feature type="region of interest" description="Condensation 5" evidence="1">
    <location>
        <begin position="4689"/>
        <end position="5016"/>
    </location>
</feature>
<feature type="compositionally biased region" description="Low complexity" evidence="3">
    <location>
        <begin position="1933"/>
        <end position="1957"/>
    </location>
</feature>
<feature type="compositionally biased region" description="Low complexity" evidence="3">
    <location>
        <begin position="1993"/>
        <end position="2011"/>
    </location>
</feature>
<feature type="modified residue" description="O-(pantetheine 4'-phosphoryl)serine" evidence="2">
    <location>
        <position position="790"/>
    </location>
</feature>
<feature type="modified residue" description="O-(pantetheine 4'-phosphoryl)serine" evidence="2">
    <location>
        <position position="1890"/>
    </location>
</feature>
<feature type="modified residue" description="O-(pantetheine 4'-phosphoryl)serine" evidence="2">
    <location>
        <position position="3066"/>
    </location>
</feature>
<feature type="modified residue" description="O-(pantetheine 4'-phosphoryl)serine" evidence="2">
    <location>
        <position position="4613"/>
    </location>
</feature>
<accession>A0A395I3F8</accession>
<reference key="1">
    <citation type="journal article" date="2018" name="Nat. Genet.">
        <title>Investigation of inter- and intraspecies variation through genome sequencing of Aspergillus section Nigri.</title>
        <authorList>
            <person name="Vesth T.C."/>
            <person name="Nybo J.L."/>
            <person name="Theobald S."/>
            <person name="Frisvad J.C."/>
            <person name="Larsen T.O."/>
            <person name="Nielsen K.F."/>
            <person name="Hoof J.B."/>
            <person name="Brandl J."/>
            <person name="Salamov A."/>
            <person name="Riley R."/>
            <person name="Gladden J.M."/>
            <person name="Phatale P."/>
            <person name="Nielsen M.T."/>
            <person name="Lyhne E.K."/>
            <person name="Kogle M.E."/>
            <person name="Strasser K."/>
            <person name="McDonnell E."/>
            <person name="Barry K."/>
            <person name="Clum A."/>
            <person name="Chen C."/>
            <person name="LaButti K."/>
            <person name="Haridas S."/>
            <person name="Nolan M."/>
            <person name="Sandor L."/>
            <person name="Kuo A."/>
            <person name="Lipzen A."/>
            <person name="Hainaut M."/>
            <person name="Drula E."/>
            <person name="Tsang A."/>
            <person name="Magnuson J.K."/>
            <person name="Henrissat B."/>
            <person name="Wiebenga A."/>
            <person name="Simmons B.A."/>
            <person name="Maekelae M.R."/>
            <person name="de Vries R.P."/>
            <person name="Grigoriev I.V."/>
            <person name="Mortensen U.H."/>
            <person name="Baker S.E."/>
            <person name="Andersen M.R."/>
        </authorList>
    </citation>
    <scope>NUCLEOTIDE SEQUENCE [LARGE SCALE GENOMIC DNA]</scope>
    <source>
        <strain>CBS 101889</strain>
    </source>
</reference>
<reference key="2">
    <citation type="journal article" date="2009" name="J. Antibiot.">
        <title>Solid-phase synthesis and biological activity of malformin C and its derivatives.</title>
        <authorList>
            <person name="Kojima Y."/>
            <person name="Sunazuka T."/>
            <person name="Nagai K."/>
            <person name="Hirose T."/>
            <person name="Namatame M."/>
            <person name="Ishiyama A."/>
            <person name="Otoguro K."/>
            <person name="Omura S."/>
        </authorList>
    </citation>
    <scope>BIOTECHNOLOGY</scope>
</reference>
<reference key="3">
    <citation type="journal article" date="2015" name="PLoS ONE">
        <title>Study of malformin C, a fungal source cyclic pentapeptide, as an anti-cancer drug.</title>
        <authorList>
            <person name="Wang J."/>
            <person name="Jiang Z."/>
            <person name="Lam W."/>
            <person name="Gullen E.A."/>
            <person name="Yu Z."/>
            <person name="Wei Y."/>
            <person name="Wang L."/>
            <person name="Zeiss C."/>
            <person name="Beck A."/>
            <person name="Cheng E.C."/>
            <person name="Wu C."/>
            <person name="Cheng Y.C."/>
            <person name="Zhang Y."/>
        </authorList>
    </citation>
    <scope>BIOTECHNOLOGY</scope>
</reference>
<reference key="4">
    <citation type="journal article" date="2016" name="Cancer Chemother. Pharmacol.">
        <title>Malformin A1 promotes cell death through induction of apoptosis, necrosis and autophagy in prostate cancer cells.</title>
        <authorList>
            <person name="Liu Y."/>
            <person name="Wang M."/>
            <person name="Wang D."/>
            <person name="Li X."/>
            <person name="Wang W."/>
            <person name="Lou H."/>
            <person name="Yuan H."/>
        </authorList>
    </citation>
    <scope>BIOTECHNOLOGY</scope>
</reference>
<reference key="5">
    <citation type="journal article" date="2017" name="Int. J. Oncol.">
        <title>Malformin A1 treatment alters invasive and oncogenic phenotypes of human colorectal cancer cells through stimulation of the p38 signaling pathway.</title>
        <authorList>
            <person name="Park S.Y."/>
            <person name="Oh H.H."/>
            <person name="Park Y.L."/>
            <person name="Yu H.M."/>
            <person name="Myung D.S."/>
            <person name="Cho S.B."/>
            <person name="Lee W.S."/>
            <person name="Park D."/>
            <person name="Joo Y.E."/>
        </authorList>
    </citation>
    <scope>BIOTECHNOLOGY</scope>
</reference>
<reference key="6">
    <citation type="journal article" date="2018" name="Sci. Rep.">
        <title>Uncovering secondary metabolite evolution and biosynthesis using gene cluster networks and genetic dereplication.</title>
        <authorList>
            <person name="Theobald S."/>
            <person name="Vesth T.C."/>
            <person name="Rendsvig J.K."/>
            <person name="Nielsen K.F."/>
            <person name="Riley R."/>
            <person name="de Abreu L.M."/>
            <person name="Salamov A."/>
            <person name="Frisvad J.C."/>
            <person name="Larsen T.O."/>
            <person name="Andersen M.R."/>
            <person name="Hoof J.B."/>
        </authorList>
    </citation>
    <scope>IDENTIFICATION</scope>
    <scope>FUNCTION</scope>
    <scope>PATHWAY</scope>
</reference>
<sequence length="5098" mass="561352">MSRFSCIFPTLTDGYVPNPDNTRAAGQRTYAIDLSRRNAPSSETESHILAAWGLVLYSYVGTDEVAFYVVPKSGPDTTALAELKVEGDMSRQALTHAAEQLFPTGSVGAGQVSGDTANTIIDFANDIESLFVTQTEESFLSLHVHGDEQGHVSLSLTYHLSLLTDLQAANVGTAMAQALAEVGKDDCDRLIKDLNLMSPTHLEHIWKFNANVPGTWEECFHDVIERHAANRPHSLAVDAWDTKLTYADLVREASLLAAYLQQRGVRPGSVVPISFERSGAALVAMLAVSKAGGAFVSVPPNLPAGRLDAILEVIEAPFVVTWSKYESFWAERLPTLPIDNYPKPSADAAVEALGKPEDLFYVIFTSGSTGRPKGCMLSHSNWLNGALRNAPSWKYGPESRVLQMLSHTFDMSLLEICTSLGSGACVCVPRTEEIETSVSDAINRWQVNHVIMTPSLARALRPDDVPGLKTMCLGGEAFPKEIVTMWSERINLWQFYGPSECSINSSSRAITRPDADPLNIGPPNSAACWVVDTQDYNKLVPVGAIGELLVSGPIVGMGYLKNPVKTAEAFLDQVGFVAKDDPQFGGFRFYRTGDLVRWNSDGTITFCGRADTQVKLNGQRLELAEVEYQLGLEAGVQYAIAMAPQTGRCKNNLIAILTVKGTSTSNQGNAAEISLLDRRDPIVQQTVKKLRSQLQHALPRYMVPTIWAFVGRMPMSPSGKIDRVQLRNWVQDMSQEAFDAITGRSFEAEDHVLGLSRLEQEIQLAWAEALGLSAAEVGVQQPFVALGGDSIKALDAVARCRARQIKISMVHILSCEGVREAASLAKVQETPAQQVAEMAVDYSDLWTRLSTDYELGKLGISQLEEVEDVFPCTTMQEGMFLGQIRRPGAYHMRFFHRVQLKGGCLPPVERIQQAWAALVERHPSLRTVFVDDLSPEAIYHSVVLRSVPMELTMREVPRDLNPEAALAMFTEELVPFRPNAPLHRMLLLTCRGRVPYFMLEISHVIMDGYALSVFRREFIQACSSTAPLPRGPDYRMFANYHRTRQTDESAKYWTDYLADCTGCHIPTHAEAAPTDVPPKWPRTLQRRDFGFDNSAAFLQRCKERQVTLACAIRAAWALVLRAYTQSQDVCFGYVSSGRNVPVPEVETIFGLCLSMQVCRAKLSEASTMARLARKIQEDYVASLPFQHYPLAEAQRGLKQTRGQGLFNTAISMEWVPPTAEDENALLDLEEIREQDDPTEYDIAISVDVHEGHIKLGFLYWPNLTDFEIAHLAEALQGALNCFAFQPDEALDSLTLLQASDFCSTLGDRSTMLPLEAVRGNVMSMIDGWVTRQPESAAIDGWDGSLSYKKLHEQSSWVAHNLLHQGVQPGDRVLVCADRSSRTVATILGLVRAGCVLVLSTPTDPEKRLQWLAQKCNAALVVADPAYEKRFATAGPRVLSTTSVCVPAAWDYEFPALDEQDLVSILFTSGSTGTPKGTLMDHGALATSVLLGHGRTLRFSRHTRMLHFASLTFDAALAEIFTTLAHGGCICVPCEEDRLSDVPGCISRFAVNTAMLTPSVGRLLDPGALPTLKALVMIGEPMSRLDVERFAPVLDLYNGAGPTETSIMVTIAGPMKPTDDPVNLGYPVTGVRLWVTEAENPNRLAPLGAVGELIVEGRLVTRGYLDDPSRTQEAFLTSLPWLPSQHALYRTGDLVRYADDGSLRYMGRKDTQVKLRGQRIELQEVEYHLRKILPQAQVVVEMVVPEGKMRAQASLVAFVSGLTAADVESSSACNFEESMPMSQIVFPRSALQTLEEALPRHMIPSVYYALDTIPLSINGKVDRRRLREMGAALLASSAAHKGAVDEMSEPVKWTAASELERTLSELWAATLELEAEAIHCDDSFFELGGDSVSAMKLVAMARDQFKLSLSVPQMFRYPTIRQLAAEFGEPAGQSASSASSTTEEGFTFSTPDDSSTNDGVDDDFLQLATAQLAQLAREKGKKVDIASLLKQLQGSSSSSKTPSGSSSSSSSSSRKKKSARVVSPVKVPAPVPVPFSLLDGGADVVEKVCVYAVDQCKIPHEDIEDIYPATALQEGMMALMARTPGVYTTTLTCELPEQVDFARLHAAWDKTAEAHPILRTRIILTDNNTAMQVVQRAKELPWDTYYLQDGDILPDLTSNMTLGSPLLRLAEIHRQDQPRMLMVAIHHALYDGWSMPLLKQAVEDVYHGRPLQSQPFTPFINYLNAGKPAAQAFWTAHLDSFAGGVFPTLPSIDHHVQLTERRTRSLTVPAALPGSQYTLATKIQTAWAVTVSRYAEAEDIVFGTVSTGRSAPVPAIDRMVGPTITTVPVRISLSDQAERVISLLQRVQEDGWNRMDHEHLGLQHIRRLGESCAATCSLQTLLVIQPREQPRAKSGSTLLAGLQDVAELEGVDTYPLMLVCEPDGASLHLTAMFDPAVLDEVMLGRMLAHWELILTQLWSEPDMAVMELDALSHSDRQTLVRWNAGERVADGCAHDAVHEWSVRTPHAPAVCAWDGEWTYEELEKCSSLIVRQILAHGVSSGDFVALYHEKSRWAAAGILAVFKAGGILVTLDPAHPKDRIKDIVYQARPRLILTSQSLLGEARELEVPVLSVSFAASQQTPEECSPLPIVSSTQAAYAPFTSGSTGRPKGIVLDHRGLAASTASVAHACLLRPASRVLHFASFAFDASMMEHLIAWHAGGCLCIPDETARQTDLASCIRDFEITWAFLTPSCLRLITPDDVQSLEALGLGGESMTSEDISIWGPRLRQIVQLYGPAECCIVAALTEVTKPSENRLIGRPNACRCWVVDPQNPDRLAPLGAVGELVIEGITVGWGYIDDPERTTQAFIRPPTWLQTLYPNSQQPGRLYRTGDLVRYAGADGKLTFIGRRDGQLKLHGQRIELADVEAHLRPLMPGTQKIVVEMVHSADNQHPLLAAFVEEPLASQNPSEQEVGLLHPSQTQCALDVKAIDSVLSRMVPQYMIPSMYLHISRLPLSASGKLNRRHLREIVAEFPRQRLNEYAAGSGLTVPDRPVTAQEREMQAIWARVLSLDPDTIGINEDFFRIGGDSISGMQVATKCNAAGMHITGADLFRHRTIEQLMRHLSATRKSGCASISLPAEPVGEWVALAPIQQLFFEIAPQGPNHFNQSLLLRTGRRVSVEELAGGLDILVERHSMLRARFCRDDSGQWSQQVRSLGSYPASAFYRLATHNQVAPQSLPTLLTASQLALSIQEGPLLAVDLVDLADGAQLVYLVAHHLIIDLVSWRILHGELEEYLQTGSLASATGSVSFLTWSRAQAEYSANHLTPTRALPDFQEANDGFDAPKYWGISSESNTFGQTSSSRFTLDRTVTDQLFGSANNVLDTRPVEILQAALWYSFTRSLTDRPGPSIYVEGHGREPWTESIDLSRTVGWFTTMSPLVSAPWDSLSRTRMRDFLDALSYIKDQRRRIPANGWAYFTSRYLNDEGKVAYGRMKSVVEIMFNYMGQYQEMNREDAILQLAGDDIQSGTGAADIAGNVPRFSLIDVSAFTANGCLTFEFIFPESMQQDARLKQWFKECERTLIVAASTLSTESPRKTLTDFPLMPALTYDQLNQCLDQTLPSMGLCARDVVNIYPCSSVQQGMLLAQLRDQQAYQQRLRFQVNSRGPTDRLTLERVKDAWTEVINRHDILRTLLLPVSDYNHLDQVVMAPGSLQHLVRMNAMDANPTQGLPHSINITSDSTGTVICEWNVSHALVDAMSIAVIQREVNQALQGSLGQHQNLPRYADYVQWLSLQDNTETQAYWQNYLEGVEPCLFPKLTSLPDKVNPEGTISAIRATWTRDARMHDLCQKHGITLTNLFHMIWALVLGAYVGTDEVCFGYTTLGRDVPVDGVEKMVGPLVNVVATIVQLQEDDSILNALLTHQTHLTNSLQHQHYALADLYASSGLVGSRLFNTIVSLQDMSHFDAPDEQPTWLEMLPANDVSEYDVALNIGVDQSSIQLVCSYRTLSLSAVQADALLRTASHVLSEMLRDPTQRFSELEVISPECKEQLMKWNAAMPAPTEEYIHEKIQGQCRLHASREAVCAWDGIFTYAEVDDLSSRLAARLIRMGVTSEHIIPIYAPKSRWTVIAILGVLKSGAAFTLLETSHPMARLQVICHEIKADMIIAPASHAGPAANLAPIIVGLDRITSMSPQTSDLLPTVGMPPAAEALAYLIFTSGSTGNPKGVMVTHQNLCSNASIMTTSVNMMSDSRVLQFASHAFDGCLWEILGPLFAGACLIIPSESESQEDLAGCIERMVVTWAFLTPSVARILKPETLPSLRVLTLGGEPIAASDLDMWRGHVQVVCAYGPTETTILASTTSPSTFPTDGRDIGVPTGSSLWIVDKRNYLKLAPLGATGELLIEGPNVSQGYLGDPEKTNEAFPVAPRWLSQLRQSPTRIYRTGDLVRFDTSTGTIRFVGRKDNQIKFHGQRIELGEIEHHAQQAFSNSSTVIVDLITPAQPQRPYIVAFVHQPDTKTATADPIDAILLPPSESFRAEALGAQNHMHKRLPHYMVPTVFLPLQWLPLSGTGKADRKRLRQCALALPSPDLDAYRATALMKRMPSTAAERKMQELVATVLGRGVSEIGMDDSFFYLGGDSVQAMRLVAEGRHQGLALSLRAIFDAPRLGDLAYRTTNLVKVNQPIQATSPVTLRDECNHIETIVATHPIKKTDVVDVLPTTSFQRHWLDIQLMSYIVVDIPGPIDPERLLTAMQRVVEAHPILRASFVPYEDTTMQVILRTRVAMTAADLSTTTVEDICRQDEDAPMILGTPYMRVILASQGDVGHKLIMRLSHAQYDAVSLSLLMNDLRHAYANETRPFPSSHSPPFTDYITYQQTLRADPTATTFWHSLLQDVPITCLNLQPAETSTSNGTPITRTRDINISPFPSLPNGITIATAVKAAWSLVLAQKTDSLAVIFGQVVHGRGIALPGVEGIVGPCANITPVVARLGRQTAGLELMQTLQDQHRSAMPYETVDLDDALAYSKDSQARRKGLQTIVQHQNNVVVDDMELSLGEVKCGVDVRAVDHVPREVWIYSSVDEKRPRILEVKIMSSTLVLNEEVAEELMDLLIEKIVGLFRDPEGVCV</sequence>
<organism>
    <name type="scientific">Aspergillus homomorphus (strain CBS 101889)</name>
    <dbReference type="NCBI Taxonomy" id="1450537"/>
    <lineage>
        <taxon>Eukaryota</taxon>
        <taxon>Fungi</taxon>
        <taxon>Dikarya</taxon>
        <taxon>Ascomycota</taxon>
        <taxon>Pezizomycotina</taxon>
        <taxon>Eurotiomycetes</taxon>
        <taxon>Eurotiomycetidae</taxon>
        <taxon>Eurotiales</taxon>
        <taxon>Aspergillaceae</taxon>
        <taxon>Aspergillus</taxon>
        <taxon>Aspergillus subgen. Circumdati</taxon>
    </lineage>
</organism>
<keyword id="KW-0436">Ligase</keyword>
<keyword id="KW-0596">Phosphopantetheine</keyword>
<keyword id="KW-0597">Phosphoprotein</keyword>
<keyword id="KW-1185">Reference proteome</keyword>
<keyword id="KW-0677">Repeat</keyword>
<name>MLFA_ASPHC</name>
<comment type="function">
    <text evidence="8 11">Nonribosomal peptide synthetase; part of the gene cluster that mediates the biosynthesis of malformins, cyclic pentapeptides with a disulfide bond between 2 consecutive cysteins, that show potential anti-tumor as well as antimalarial and antitrypanosomal properties (PubMed:30560908). The nonribosomal peptide synthetase mlfA is responsible of the formation of the cyclic pentapeptide (Probable). The malformin biosynthesis clusters in malformin-producing fungi also contain enzymes involved in the formation of the disulfide bond between the two consecutive cysteins within malformins, in addition to additional tailoring enzymes such as methyltransferases or oxidoreductases. They are also composed of up to 4 major facilitator superfamily transporters, and transcription factors probably involved in the regulation of the expression of those clusters (Probable).</text>
</comment>
<comment type="pathway">
    <text evidence="11">Secondary metabolite biosynthesis.</text>
</comment>
<comment type="domain">
    <text evidence="11">NRP synthetases are composed of discrete domains (adenylation (A), thiolation (T) or peptidyl carrier protein (PCP) and condensation (C) domains) which when grouped together are referred to as a single module. Each module is responsible for the recognition (via the A domain) and incorporation of a single amino acid into the growing peptide product. Thus, an NRP synthetase is generally composed of one or more modules and can terminate in a thioesterase domain (TE) that releases the newly synthesized peptide from the enzyme. Occasionally, epimerase (E) domains (responsible for L- to D- amino acid conversion) are present within the NRP synthetase. MlfA has the following architecture: A-T-C-A-T-C-A-T-C-C-A-T-C, with the functions of the five condensation domains during malformin biosynthesis being DL-joining (epimerizing subtype), LL-joining, epimerization, DL-joining and cyclizing domain, respectively.</text>
</comment>
<comment type="biotechnology">
    <text evidence="4 5 6 7">Malformins show anti-tumor properties against human colorectal and prostate cancer cells by the inhibition of proliferation and induction of apoptosis through the activation of the p38 signaling pathway (PubMed:26540166, PubMed:26645406, PubMed:28713983). Malformin C has also been shown to exhibit potent antimalarial and antitrypanosomal properties (PubMed:19876076).</text>
</comment>
<comment type="similarity">
    <text evidence="10">Belongs to the NRP synthetase family.</text>
</comment>
<dbReference type="EC" id="6.3.2.-" evidence="8"/>
<dbReference type="EMBL" id="KZ824274">
    <property type="protein sequence ID" value="RAL14731.1"/>
    <property type="molecule type" value="Genomic_DNA"/>
</dbReference>
<dbReference type="RefSeq" id="XP_025553885.1">
    <property type="nucleotide sequence ID" value="XM_025699543.1"/>
</dbReference>
<dbReference type="SMR" id="A0A395I3F8"/>
<dbReference type="STRING" id="1450537.A0A395I3F8"/>
<dbReference type="GeneID" id="37203832"/>
<dbReference type="VEuPathDB" id="FungiDB:BO97DRAFT_465346"/>
<dbReference type="OrthoDB" id="416786at2759"/>
<dbReference type="Proteomes" id="UP000248961">
    <property type="component" value="Unassembled WGS sequence"/>
</dbReference>
<dbReference type="GO" id="GO:0005737">
    <property type="term" value="C:cytoplasm"/>
    <property type="evidence" value="ECO:0007669"/>
    <property type="project" value="TreeGrafter"/>
</dbReference>
<dbReference type="GO" id="GO:0016874">
    <property type="term" value="F:ligase activity"/>
    <property type="evidence" value="ECO:0007669"/>
    <property type="project" value="UniProtKB-KW"/>
</dbReference>
<dbReference type="GO" id="GO:0031177">
    <property type="term" value="F:phosphopantetheine binding"/>
    <property type="evidence" value="ECO:0007669"/>
    <property type="project" value="InterPro"/>
</dbReference>
<dbReference type="GO" id="GO:0043041">
    <property type="term" value="P:amino acid activation for nonribosomal peptide biosynthetic process"/>
    <property type="evidence" value="ECO:0007669"/>
    <property type="project" value="TreeGrafter"/>
</dbReference>
<dbReference type="GO" id="GO:0044550">
    <property type="term" value="P:secondary metabolite biosynthetic process"/>
    <property type="evidence" value="ECO:0007669"/>
    <property type="project" value="TreeGrafter"/>
</dbReference>
<dbReference type="CDD" id="cd05918">
    <property type="entry name" value="A_NRPS_SidN3_like"/>
    <property type="match status" value="4"/>
</dbReference>
<dbReference type="CDD" id="cd19542">
    <property type="entry name" value="CT_NRPS-like"/>
    <property type="match status" value="2"/>
</dbReference>
<dbReference type="CDD" id="cd19534">
    <property type="entry name" value="E_NRPS"/>
    <property type="match status" value="1"/>
</dbReference>
<dbReference type="CDD" id="cd19545">
    <property type="entry name" value="FUM14_C_NRPS-like"/>
    <property type="match status" value="1"/>
</dbReference>
<dbReference type="FunFam" id="3.30.559.10:FF:000016">
    <property type="entry name" value="Nonribosomal peptide synthase Pes1"/>
    <property type="match status" value="1"/>
</dbReference>
<dbReference type="FunFam" id="3.30.559.30:FF:000002">
    <property type="entry name" value="Nonribosomal peptide synthase Pes1"/>
    <property type="match status" value="1"/>
</dbReference>
<dbReference type="FunFam" id="3.30.300.30:FF:000015">
    <property type="entry name" value="Nonribosomal peptide synthase SidD"/>
    <property type="match status" value="4"/>
</dbReference>
<dbReference type="FunFam" id="3.30.559.30:FF:000003">
    <property type="entry name" value="Nonribosomal peptide synthase SidD"/>
    <property type="match status" value="1"/>
</dbReference>
<dbReference type="FunFam" id="1.10.1200.10:FF:000005">
    <property type="entry name" value="Nonribosomal peptide synthetase 1"/>
    <property type="match status" value="1"/>
</dbReference>
<dbReference type="Gene3D" id="3.30.300.30">
    <property type="match status" value="4"/>
</dbReference>
<dbReference type="Gene3D" id="1.10.1200.10">
    <property type="entry name" value="ACP-like"/>
    <property type="match status" value="4"/>
</dbReference>
<dbReference type="Gene3D" id="3.30.559.10">
    <property type="entry name" value="Chloramphenicol acetyltransferase-like domain"/>
    <property type="match status" value="5"/>
</dbReference>
<dbReference type="Gene3D" id="3.40.50.12780">
    <property type="entry name" value="N-terminal domain of ligase-like"/>
    <property type="match status" value="4"/>
</dbReference>
<dbReference type="Gene3D" id="3.30.559.30">
    <property type="entry name" value="Nonribosomal peptide synthetase, condensation domain"/>
    <property type="match status" value="6"/>
</dbReference>
<dbReference type="InterPro" id="IPR010071">
    <property type="entry name" value="AA_adenyl_dom"/>
</dbReference>
<dbReference type="InterPro" id="IPR036736">
    <property type="entry name" value="ACP-like_sf"/>
</dbReference>
<dbReference type="InterPro" id="IPR045851">
    <property type="entry name" value="AMP-bd_C_sf"/>
</dbReference>
<dbReference type="InterPro" id="IPR020845">
    <property type="entry name" value="AMP-binding_CS"/>
</dbReference>
<dbReference type="InterPro" id="IPR000873">
    <property type="entry name" value="AMP-dep_synth/lig_dom"/>
</dbReference>
<dbReference type="InterPro" id="IPR042099">
    <property type="entry name" value="ANL_N_sf"/>
</dbReference>
<dbReference type="InterPro" id="IPR023213">
    <property type="entry name" value="CAT-like_dom_sf"/>
</dbReference>
<dbReference type="InterPro" id="IPR001242">
    <property type="entry name" value="Condensatn"/>
</dbReference>
<dbReference type="InterPro" id="IPR020806">
    <property type="entry name" value="PKS_PP-bd"/>
</dbReference>
<dbReference type="InterPro" id="IPR009081">
    <property type="entry name" value="PP-bd_ACP"/>
</dbReference>
<dbReference type="InterPro" id="IPR006162">
    <property type="entry name" value="Ppantetheine_attach_site"/>
</dbReference>
<dbReference type="NCBIfam" id="TIGR01733">
    <property type="entry name" value="AA-adenyl-dom"/>
    <property type="match status" value="4"/>
</dbReference>
<dbReference type="NCBIfam" id="NF003417">
    <property type="entry name" value="PRK04813.1"/>
    <property type="match status" value="4"/>
</dbReference>
<dbReference type="PANTHER" id="PTHR45527">
    <property type="entry name" value="NONRIBOSOMAL PEPTIDE SYNTHETASE"/>
    <property type="match status" value="1"/>
</dbReference>
<dbReference type="PANTHER" id="PTHR45527:SF12">
    <property type="entry name" value="NONRIBOSOMAL PEPTIDE SYNTHETASE IVOA"/>
    <property type="match status" value="1"/>
</dbReference>
<dbReference type="Pfam" id="PF00501">
    <property type="entry name" value="AMP-binding"/>
    <property type="match status" value="4"/>
</dbReference>
<dbReference type="Pfam" id="PF00668">
    <property type="entry name" value="Condensation"/>
    <property type="match status" value="5"/>
</dbReference>
<dbReference type="Pfam" id="PF00550">
    <property type="entry name" value="PP-binding"/>
    <property type="match status" value="4"/>
</dbReference>
<dbReference type="SMART" id="SM00823">
    <property type="entry name" value="PKS_PP"/>
    <property type="match status" value="3"/>
</dbReference>
<dbReference type="SMART" id="SM01294">
    <property type="entry name" value="PKS_PP_betabranch"/>
    <property type="match status" value="1"/>
</dbReference>
<dbReference type="SUPFAM" id="SSF56801">
    <property type="entry name" value="Acetyl-CoA synthetase-like"/>
    <property type="match status" value="4"/>
</dbReference>
<dbReference type="SUPFAM" id="SSF47336">
    <property type="entry name" value="ACP-like"/>
    <property type="match status" value="4"/>
</dbReference>
<dbReference type="SUPFAM" id="SSF52777">
    <property type="entry name" value="CoA-dependent acyltransferases"/>
    <property type="match status" value="10"/>
</dbReference>
<dbReference type="PROSITE" id="PS00455">
    <property type="entry name" value="AMP_BINDING"/>
    <property type="match status" value="3"/>
</dbReference>
<dbReference type="PROSITE" id="PS50075">
    <property type="entry name" value="CARRIER"/>
    <property type="match status" value="4"/>
</dbReference>
<dbReference type="PROSITE" id="PS00012">
    <property type="entry name" value="PHOSPHOPANTETHEINE"/>
    <property type="match status" value="1"/>
</dbReference>
<evidence type="ECO:0000255" key="1"/>
<evidence type="ECO:0000255" key="2">
    <source>
        <dbReference type="PROSITE-ProRule" id="PRU00258"/>
    </source>
</evidence>
<evidence type="ECO:0000256" key="3">
    <source>
        <dbReference type="SAM" id="MobiDB-lite"/>
    </source>
</evidence>
<evidence type="ECO:0000269" key="4">
    <source>
    </source>
</evidence>
<evidence type="ECO:0000269" key="5">
    <source>
    </source>
</evidence>
<evidence type="ECO:0000269" key="6">
    <source>
    </source>
</evidence>
<evidence type="ECO:0000269" key="7">
    <source>
    </source>
</evidence>
<evidence type="ECO:0000269" key="8">
    <source>
    </source>
</evidence>
<evidence type="ECO:0000303" key="9">
    <source>
    </source>
</evidence>
<evidence type="ECO:0000305" key="10"/>
<evidence type="ECO:0000305" key="11">
    <source>
    </source>
</evidence>